<proteinExistence type="inferred from homology"/>
<reference key="1">
    <citation type="journal article" date="2004" name="J. Bacteriol.">
        <title>Comparative genomics of two Leptospira interrogans serovars reveals novel insights into physiology and pathogenesis.</title>
        <authorList>
            <person name="Nascimento A.L.T.O."/>
            <person name="Ko A.I."/>
            <person name="Martins E.A.L."/>
            <person name="Monteiro-Vitorello C.B."/>
            <person name="Ho P.L."/>
            <person name="Haake D.A."/>
            <person name="Verjovski-Almeida S."/>
            <person name="Hartskeerl R.A."/>
            <person name="Marques M.V."/>
            <person name="Oliveira M.C."/>
            <person name="Menck C.F.M."/>
            <person name="Leite L.C.C."/>
            <person name="Carrer H."/>
            <person name="Coutinho L.L."/>
            <person name="Degrave W.M."/>
            <person name="Dellagostin O.A."/>
            <person name="El-Dorry H."/>
            <person name="Ferro E.S."/>
            <person name="Ferro M.I.T."/>
            <person name="Furlan L.R."/>
            <person name="Gamberini M."/>
            <person name="Giglioti E.A."/>
            <person name="Goes-Neto A."/>
            <person name="Goldman G.H."/>
            <person name="Goldman M.H.S."/>
            <person name="Harakava R."/>
            <person name="Jeronimo S.M.B."/>
            <person name="Junqueira-de-Azevedo I.L.M."/>
            <person name="Kimura E.T."/>
            <person name="Kuramae E.E."/>
            <person name="Lemos E.G.M."/>
            <person name="Lemos M.V.F."/>
            <person name="Marino C.L."/>
            <person name="Nunes L.R."/>
            <person name="de Oliveira R.C."/>
            <person name="Pereira G.G."/>
            <person name="Reis M.S."/>
            <person name="Schriefer A."/>
            <person name="Siqueira W.J."/>
            <person name="Sommer P."/>
            <person name="Tsai S.M."/>
            <person name="Simpson A.J.G."/>
            <person name="Ferro J.A."/>
            <person name="Camargo L.E.A."/>
            <person name="Kitajima J.P."/>
            <person name="Setubal J.C."/>
            <person name="Van Sluys M.A."/>
        </authorList>
    </citation>
    <scope>NUCLEOTIDE SEQUENCE [LARGE SCALE GENOMIC DNA]</scope>
    <source>
        <strain>Fiocruz L1-130</strain>
    </source>
</reference>
<feature type="chain" id="PRO_0000319183" description="Formate-dependent phosphoribosylglycinamide formyltransferase">
    <location>
        <begin position="1"/>
        <end position="387"/>
    </location>
</feature>
<feature type="domain" description="ATP-grasp" evidence="1">
    <location>
        <begin position="109"/>
        <end position="300"/>
    </location>
</feature>
<feature type="binding site" evidence="1">
    <location>
        <begin position="12"/>
        <end position="13"/>
    </location>
    <ligand>
        <name>N(1)-(5-phospho-beta-D-ribosyl)glycinamide</name>
        <dbReference type="ChEBI" id="CHEBI:143788"/>
    </ligand>
</feature>
<feature type="binding site" evidence="1">
    <location>
        <position position="72"/>
    </location>
    <ligand>
        <name>N(1)-(5-phospho-beta-D-ribosyl)glycinamide</name>
        <dbReference type="ChEBI" id="CHEBI:143788"/>
    </ligand>
</feature>
<feature type="binding site" evidence="1">
    <location>
        <position position="104"/>
    </location>
    <ligand>
        <name>ATP</name>
        <dbReference type="ChEBI" id="CHEBI:30616"/>
    </ligand>
</feature>
<feature type="binding site" evidence="1">
    <location>
        <position position="145"/>
    </location>
    <ligand>
        <name>ATP</name>
        <dbReference type="ChEBI" id="CHEBI:30616"/>
    </ligand>
</feature>
<feature type="binding site" evidence="1">
    <location>
        <begin position="150"/>
        <end position="155"/>
    </location>
    <ligand>
        <name>ATP</name>
        <dbReference type="ChEBI" id="CHEBI:30616"/>
    </ligand>
</feature>
<feature type="binding site" evidence="1">
    <location>
        <begin position="185"/>
        <end position="188"/>
    </location>
    <ligand>
        <name>ATP</name>
        <dbReference type="ChEBI" id="CHEBI:30616"/>
    </ligand>
</feature>
<feature type="binding site" evidence="1">
    <location>
        <position position="193"/>
    </location>
    <ligand>
        <name>ATP</name>
        <dbReference type="ChEBI" id="CHEBI:30616"/>
    </ligand>
</feature>
<feature type="binding site" evidence="1">
    <location>
        <position position="258"/>
    </location>
    <ligand>
        <name>Mg(2+)</name>
        <dbReference type="ChEBI" id="CHEBI:18420"/>
    </ligand>
</feature>
<feature type="binding site" evidence="1">
    <location>
        <position position="270"/>
    </location>
    <ligand>
        <name>Mg(2+)</name>
        <dbReference type="ChEBI" id="CHEBI:18420"/>
    </ligand>
</feature>
<feature type="binding site" evidence="1">
    <location>
        <position position="277"/>
    </location>
    <ligand>
        <name>N(1)-(5-phospho-beta-D-ribosyl)glycinamide</name>
        <dbReference type="ChEBI" id="CHEBI:143788"/>
    </ligand>
</feature>
<feature type="binding site" evidence="1">
    <location>
        <position position="348"/>
    </location>
    <ligand>
        <name>N(1)-(5-phospho-beta-D-ribosyl)glycinamide</name>
        <dbReference type="ChEBI" id="CHEBI:143788"/>
    </ligand>
</feature>
<feature type="binding site" evidence="1">
    <location>
        <begin position="355"/>
        <end position="356"/>
    </location>
    <ligand>
        <name>N(1)-(5-phospho-beta-D-ribosyl)glycinamide</name>
        <dbReference type="ChEBI" id="CHEBI:143788"/>
    </ligand>
</feature>
<gene>
    <name evidence="1" type="primary">purT</name>
    <name type="ordered locus">LIC_13413</name>
</gene>
<comment type="function">
    <text evidence="1">Involved in the de novo purine biosynthesis. Catalyzes the transfer of formate to 5-phospho-ribosyl-glycinamide (GAR), producing 5-phospho-ribosyl-N-formylglycinamide (FGAR). Formate is provided by PurU via hydrolysis of 10-formyl-tetrahydrofolate.</text>
</comment>
<comment type="catalytic activity">
    <reaction evidence="1">
        <text>N(1)-(5-phospho-beta-D-ribosyl)glycinamide + formate + ATP = N(2)-formyl-N(1)-(5-phospho-beta-D-ribosyl)glycinamide + ADP + phosphate + H(+)</text>
        <dbReference type="Rhea" id="RHEA:24829"/>
        <dbReference type="ChEBI" id="CHEBI:15378"/>
        <dbReference type="ChEBI" id="CHEBI:15740"/>
        <dbReference type="ChEBI" id="CHEBI:30616"/>
        <dbReference type="ChEBI" id="CHEBI:43474"/>
        <dbReference type="ChEBI" id="CHEBI:143788"/>
        <dbReference type="ChEBI" id="CHEBI:147286"/>
        <dbReference type="ChEBI" id="CHEBI:456216"/>
        <dbReference type="EC" id="6.3.1.21"/>
    </reaction>
    <physiologicalReaction direction="left-to-right" evidence="1">
        <dbReference type="Rhea" id="RHEA:24830"/>
    </physiologicalReaction>
</comment>
<comment type="pathway">
    <text evidence="1">Purine metabolism; IMP biosynthesis via de novo pathway; N(2)-formyl-N(1)-(5-phospho-D-ribosyl)glycinamide from N(1)-(5-phospho-D-ribosyl)glycinamide (formate route): step 1/1.</text>
</comment>
<comment type="subunit">
    <text evidence="1">Homodimer.</text>
</comment>
<comment type="similarity">
    <text evidence="1">Belongs to the PurK/PurT family.</text>
</comment>
<protein>
    <recommendedName>
        <fullName evidence="1">Formate-dependent phosphoribosylglycinamide formyltransferase</fullName>
        <ecNumber evidence="1">6.3.1.21</ecNumber>
    </recommendedName>
    <alternativeName>
        <fullName evidence="1">5'-phosphoribosylglycinamide transformylase 2</fullName>
    </alternativeName>
    <alternativeName>
        <fullName evidence="1">Formate-dependent GAR transformylase</fullName>
    </alternativeName>
    <alternativeName>
        <fullName evidence="1">GAR transformylase 2</fullName>
        <shortName evidence="1">GART 2</shortName>
    </alternativeName>
    <alternativeName>
        <fullName evidence="1">Non-folate glycinamide ribonucleotide transformylase</fullName>
    </alternativeName>
    <alternativeName>
        <fullName evidence="1">Phosphoribosylglycinamide formyltransferase 2</fullName>
    </alternativeName>
</protein>
<sequence length="387" mass="42952">MKKKILLLGSGELGKEFVIAAQRLGQYVIAVDSYDDAPAMQVAHEKEIINMLDGNLLDQIIAKHKPDLIVPEIEAIKTERFYEYEKQGYQVVPSAKAANFTMNRKSIRDLAAKDLKLLTAKYAYASSIDELIKATEILGFPCVVKPLMSSSGKGQSVIQSREEISKAWEASQTKGRAGAAEIIVEEFIPFESEITLLTVTQKNGKTLFCPPIGHRQERGDYQESWQPAAISEVQLKEAQRMADAVTKELTGFGIWGVEFFLTEDKVYFSELSPRPHDTGMVTLAGTQNFNEFELHLRAILGIPILEITLERKGASAVILASTENKTPEISGLDIASGMSESDFRIFGKPITRPYRRMGVTLSYSTKGEEISSLRKRAVLLASKIKVD</sequence>
<evidence type="ECO:0000255" key="1">
    <source>
        <dbReference type="HAMAP-Rule" id="MF_01643"/>
    </source>
</evidence>
<keyword id="KW-0067">ATP-binding</keyword>
<keyword id="KW-0436">Ligase</keyword>
<keyword id="KW-0460">Magnesium</keyword>
<keyword id="KW-0479">Metal-binding</keyword>
<keyword id="KW-0547">Nucleotide-binding</keyword>
<keyword id="KW-0658">Purine biosynthesis</keyword>
<dbReference type="EC" id="6.3.1.21" evidence="1"/>
<dbReference type="EMBL" id="AE016823">
    <property type="protein sequence ID" value="AAS71953.1"/>
    <property type="molecule type" value="Genomic_DNA"/>
</dbReference>
<dbReference type="RefSeq" id="WP_000727141.1">
    <property type="nucleotide sequence ID" value="NC_005823.1"/>
</dbReference>
<dbReference type="SMR" id="Q72LY0"/>
<dbReference type="GeneID" id="61143277"/>
<dbReference type="KEGG" id="lic:LIC_13413"/>
<dbReference type="HOGENOM" id="CLU_011534_1_3_12"/>
<dbReference type="UniPathway" id="UPA00074">
    <property type="reaction ID" value="UER00127"/>
</dbReference>
<dbReference type="Proteomes" id="UP000007037">
    <property type="component" value="Chromosome I"/>
</dbReference>
<dbReference type="GO" id="GO:0005829">
    <property type="term" value="C:cytosol"/>
    <property type="evidence" value="ECO:0007669"/>
    <property type="project" value="TreeGrafter"/>
</dbReference>
<dbReference type="GO" id="GO:0005524">
    <property type="term" value="F:ATP binding"/>
    <property type="evidence" value="ECO:0007669"/>
    <property type="project" value="UniProtKB-UniRule"/>
</dbReference>
<dbReference type="GO" id="GO:0000287">
    <property type="term" value="F:magnesium ion binding"/>
    <property type="evidence" value="ECO:0007669"/>
    <property type="project" value="InterPro"/>
</dbReference>
<dbReference type="GO" id="GO:0043815">
    <property type="term" value="F:phosphoribosylglycinamide formyltransferase 2 activity"/>
    <property type="evidence" value="ECO:0007669"/>
    <property type="project" value="UniProtKB-UniRule"/>
</dbReference>
<dbReference type="GO" id="GO:0004644">
    <property type="term" value="F:phosphoribosylglycinamide formyltransferase activity"/>
    <property type="evidence" value="ECO:0007669"/>
    <property type="project" value="InterPro"/>
</dbReference>
<dbReference type="GO" id="GO:0006189">
    <property type="term" value="P:'de novo' IMP biosynthetic process"/>
    <property type="evidence" value="ECO:0007669"/>
    <property type="project" value="UniProtKB-UniRule"/>
</dbReference>
<dbReference type="FunFam" id="3.30.1490.20:FF:000013">
    <property type="entry name" value="Formate-dependent phosphoribosylglycinamide formyltransferase"/>
    <property type="match status" value="1"/>
</dbReference>
<dbReference type="FunFam" id="3.30.470.20:FF:000035">
    <property type="entry name" value="Formate-dependent phosphoribosylglycinamide formyltransferase"/>
    <property type="match status" value="1"/>
</dbReference>
<dbReference type="FunFam" id="3.40.50.20:FF:000022">
    <property type="entry name" value="Formate-dependent phosphoribosylglycinamide formyltransferase"/>
    <property type="match status" value="1"/>
</dbReference>
<dbReference type="Gene3D" id="3.40.50.20">
    <property type="match status" value="1"/>
</dbReference>
<dbReference type="Gene3D" id="3.30.1490.20">
    <property type="entry name" value="ATP-grasp fold, A domain"/>
    <property type="match status" value="1"/>
</dbReference>
<dbReference type="Gene3D" id="3.30.470.20">
    <property type="entry name" value="ATP-grasp fold, B domain"/>
    <property type="match status" value="1"/>
</dbReference>
<dbReference type="HAMAP" id="MF_01643">
    <property type="entry name" value="PurT"/>
    <property type="match status" value="1"/>
</dbReference>
<dbReference type="InterPro" id="IPR011761">
    <property type="entry name" value="ATP-grasp"/>
</dbReference>
<dbReference type="InterPro" id="IPR003135">
    <property type="entry name" value="ATP-grasp_carboxylate-amine"/>
</dbReference>
<dbReference type="InterPro" id="IPR013815">
    <property type="entry name" value="ATP_grasp_subdomain_1"/>
</dbReference>
<dbReference type="InterPro" id="IPR016185">
    <property type="entry name" value="PreATP-grasp_dom_sf"/>
</dbReference>
<dbReference type="InterPro" id="IPR005862">
    <property type="entry name" value="PurT"/>
</dbReference>
<dbReference type="InterPro" id="IPR054350">
    <property type="entry name" value="PurT/PurK_preATP-grasp"/>
</dbReference>
<dbReference type="InterPro" id="IPR048740">
    <property type="entry name" value="PurT_C"/>
</dbReference>
<dbReference type="InterPro" id="IPR011054">
    <property type="entry name" value="Rudment_hybrid_motif"/>
</dbReference>
<dbReference type="NCBIfam" id="NF006766">
    <property type="entry name" value="PRK09288.1"/>
    <property type="match status" value="1"/>
</dbReference>
<dbReference type="NCBIfam" id="TIGR01142">
    <property type="entry name" value="purT"/>
    <property type="match status" value="1"/>
</dbReference>
<dbReference type="PANTHER" id="PTHR43055">
    <property type="entry name" value="FORMATE-DEPENDENT PHOSPHORIBOSYLGLYCINAMIDE FORMYLTRANSFERASE"/>
    <property type="match status" value="1"/>
</dbReference>
<dbReference type="PANTHER" id="PTHR43055:SF1">
    <property type="entry name" value="FORMATE-DEPENDENT PHOSPHORIBOSYLGLYCINAMIDE FORMYLTRANSFERASE"/>
    <property type="match status" value="1"/>
</dbReference>
<dbReference type="Pfam" id="PF02222">
    <property type="entry name" value="ATP-grasp"/>
    <property type="match status" value="1"/>
</dbReference>
<dbReference type="Pfam" id="PF21244">
    <property type="entry name" value="PurT_C"/>
    <property type="match status" value="1"/>
</dbReference>
<dbReference type="Pfam" id="PF22660">
    <property type="entry name" value="RS_preATP-grasp-like"/>
    <property type="match status" value="1"/>
</dbReference>
<dbReference type="SUPFAM" id="SSF56059">
    <property type="entry name" value="Glutathione synthetase ATP-binding domain-like"/>
    <property type="match status" value="1"/>
</dbReference>
<dbReference type="SUPFAM" id="SSF52440">
    <property type="entry name" value="PreATP-grasp domain"/>
    <property type="match status" value="1"/>
</dbReference>
<dbReference type="SUPFAM" id="SSF51246">
    <property type="entry name" value="Rudiment single hybrid motif"/>
    <property type="match status" value="1"/>
</dbReference>
<dbReference type="PROSITE" id="PS50975">
    <property type="entry name" value="ATP_GRASP"/>
    <property type="match status" value="1"/>
</dbReference>
<organism>
    <name type="scientific">Leptospira interrogans serogroup Icterohaemorrhagiae serovar copenhageni (strain Fiocruz L1-130)</name>
    <dbReference type="NCBI Taxonomy" id="267671"/>
    <lineage>
        <taxon>Bacteria</taxon>
        <taxon>Pseudomonadati</taxon>
        <taxon>Spirochaetota</taxon>
        <taxon>Spirochaetia</taxon>
        <taxon>Leptospirales</taxon>
        <taxon>Leptospiraceae</taxon>
        <taxon>Leptospira</taxon>
    </lineage>
</organism>
<accession>Q72LY0</accession>
<name>PURT_LEPIC</name>